<accession>Q7TNT2</accession>
<accession>B2KFC6</accession>
<accession>Q3TTT7</accession>
<accession>Q8BH72</accession>
<accession>Q8CAK7</accession>
<proteinExistence type="evidence at protein level"/>
<keyword id="KW-0025">Alternative splicing</keyword>
<keyword id="KW-0444">Lipid biosynthesis</keyword>
<keyword id="KW-0443">Lipid metabolism</keyword>
<keyword id="KW-0472">Membrane</keyword>
<keyword id="KW-0521">NADP</keyword>
<keyword id="KW-0560">Oxidoreductase</keyword>
<keyword id="KW-0576">Peroxisome</keyword>
<keyword id="KW-1185">Reference proteome</keyword>
<keyword id="KW-0812">Transmembrane</keyword>
<keyword id="KW-1133">Transmembrane helix</keyword>
<dbReference type="EC" id="1.2.1.84" evidence="3"/>
<dbReference type="EMBL" id="AK038584">
    <property type="protein sequence ID" value="BAC30056.1"/>
    <property type="molecule type" value="mRNA"/>
</dbReference>
<dbReference type="EMBL" id="AK043388">
    <property type="protein sequence ID" value="BAC31532.1"/>
    <property type="molecule type" value="mRNA"/>
</dbReference>
<dbReference type="EMBL" id="AK043589">
    <property type="protein sequence ID" value="BAC31590.1"/>
    <property type="molecule type" value="mRNA"/>
</dbReference>
<dbReference type="EMBL" id="AK161201">
    <property type="protein sequence ID" value="BAE36237.1"/>
    <property type="molecule type" value="mRNA"/>
</dbReference>
<dbReference type="EMBL" id="CU207318">
    <property type="status" value="NOT_ANNOTATED_CDS"/>
    <property type="molecule type" value="Genomic_DNA"/>
</dbReference>
<dbReference type="EMBL" id="BC055759">
    <property type="protein sequence ID" value="AAH55759.1"/>
    <property type="molecule type" value="mRNA"/>
</dbReference>
<dbReference type="CCDS" id="CCDS39718.1">
    <molecule id="Q7TNT2-2"/>
</dbReference>
<dbReference type="CCDS" id="CCDS85188.1">
    <molecule id="Q7TNT2-1"/>
</dbReference>
<dbReference type="RefSeq" id="NP_001334445.1">
    <molecule id="Q7TNT2-1"/>
    <property type="nucleotide sequence ID" value="NM_001347516.1"/>
</dbReference>
<dbReference type="RefSeq" id="NP_848912.1">
    <molecule id="Q7TNT2-2"/>
    <property type="nucleotide sequence ID" value="NM_178797.4"/>
</dbReference>
<dbReference type="RefSeq" id="XP_006507133.1">
    <molecule id="Q7TNT2-1"/>
    <property type="nucleotide sequence ID" value="XM_006507070.5"/>
</dbReference>
<dbReference type="RefSeq" id="XP_036022150.1">
    <molecule id="Q7TNT2-1"/>
    <property type="nucleotide sequence ID" value="XM_036166257.1"/>
</dbReference>
<dbReference type="SMR" id="Q7TNT2"/>
<dbReference type="FunCoup" id="Q7TNT2">
    <property type="interactions" value="246"/>
</dbReference>
<dbReference type="STRING" id="10090.ENSMUSP00000032443"/>
<dbReference type="SwissLipids" id="SLP:000000211"/>
<dbReference type="iPTMnet" id="Q7TNT2"/>
<dbReference type="PhosphoSitePlus" id="Q7TNT2"/>
<dbReference type="PaxDb" id="10090-ENSMUSP00000107234"/>
<dbReference type="PeptideAtlas" id="Q7TNT2"/>
<dbReference type="ProteomicsDB" id="267705">
    <molecule id="Q7TNT2-1"/>
</dbReference>
<dbReference type="ProteomicsDB" id="267706">
    <molecule id="Q7TNT2-2"/>
</dbReference>
<dbReference type="Antibodypedia" id="2982">
    <property type="antibodies" value="76 antibodies from 19 providers"/>
</dbReference>
<dbReference type="Ensembl" id="ENSMUST00000032443.14">
    <molecule id="Q7TNT2-1"/>
    <property type="protein sequence ID" value="ENSMUSP00000032443.8"/>
    <property type="gene ID" value="ENSMUSG00000030303.16"/>
</dbReference>
<dbReference type="Ensembl" id="ENSMUST00000111607.4">
    <molecule id="Q7TNT2-2"/>
    <property type="protein sequence ID" value="ENSMUSP00000107234.4"/>
    <property type="gene ID" value="ENSMUSG00000030303.16"/>
</dbReference>
<dbReference type="GeneID" id="330450"/>
<dbReference type="KEGG" id="mmu:330450"/>
<dbReference type="UCSC" id="uc009etb.1">
    <molecule id="Q7TNT2-1"/>
    <property type="organism name" value="mouse"/>
</dbReference>
<dbReference type="UCSC" id="uc009etc.1">
    <molecule id="Q7TNT2-2"/>
    <property type="organism name" value="mouse"/>
</dbReference>
<dbReference type="AGR" id="MGI:2687035"/>
<dbReference type="CTD" id="55711"/>
<dbReference type="MGI" id="MGI:2687035">
    <property type="gene designation" value="Far2"/>
</dbReference>
<dbReference type="VEuPathDB" id="HostDB:ENSMUSG00000030303"/>
<dbReference type="eggNOG" id="KOG1221">
    <property type="taxonomic scope" value="Eukaryota"/>
</dbReference>
<dbReference type="GeneTree" id="ENSGT00390000006367"/>
<dbReference type="HOGENOM" id="CLU_024661_0_0_1"/>
<dbReference type="InParanoid" id="Q7TNT2"/>
<dbReference type="OMA" id="WRFFIAR"/>
<dbReference type="OrthoDB" id="429813at2759"/>
<dbReference type="PhylomeDB" id="Q7TNT2"/>
<dbReference type="TreeFam" id="TF313011"/>
<dbReference type="BRENDA" id="1.2.1.84">
    <property type="organism ID" value="3474"/>
</dbReference>
<dbReference type="Reactome" id="R-MMU-9640463">
    <property type="pathway name" value="Wax biosynthesis"/>
</dbReference>
<dbReference type="BioGRID-ORCS" id="330450">
    <property type="hits" value="4 hits in 78 CRISPR screens"/>
</dbReference>
<dbReference type="ChiTaRS" id="Far2">
    <property type="organism name" value="mouse"/>
</dbReference>
<dbReference type="PRO" id="PR:Q7TNT2"/>
<dbReference type="Proteomes" id="UP000000589">
    <property type="component" value="Chromosome 6"/>
</dbReference>
<dbReference type="RNAct" id="Q7TNT2">
    <property type="molecule type" value="protein"/>
</dbReference>
<dbReference type="Bgee" id="ENSMUSG00000030303">
    <property type="expression patterns" value="Expressed in tail skin and 141 other cell types or tissues"/>
</dbReference>
<dbReference type="GO" id="GO:0005778">
    <property type="term" value="C:peroxisomal membrane"/>
    <property type="evidence" value="ECO:0000250"/>
    <property type="project" value="UniProtKB"/>
</dbReference>
<dbReference type="GO" id="GO:0005777">
    <property type="term" value="C:peroxisome"/>
    <property type="evidence" value="ECO:0000314"/>
    <property type="project" value="MGI"/>
</dbReference>
<dbReference type="GO" id="GO:0102965">
    <property type="term" value="F:alcohol-forming long-chain fatty acyl-CoA reductase activity"/>
    <property type="evidence" value="ECO:0007669"/>
    <property type="project" value="UniProtKB-EC"/>
</dbReference>
<dbReference type="GO" id="GO:0080019">
    <property type="term" value="F:alcohol-forming very long-chain fatty acyl-CoA reductase activity"/>
    <property type="evidence" value="ECO:0000314"/>
    <property type="project" value="MGI"/>
</dbReference>
<dbReference type="GO" id="GO:0035336">
    <property type="term" value="P:long-chain fatty-acyl-CoA metabolic process"/>
    <property type="evidence" value="ECO:0007669"/>
    <property type="project" value="Ensembl"/>
</dbReference>
<dbReference type="GO" id="GO:0010025">
    <property type="term" value="P:wax biosynthetic process"/>
    <property type="evidence" value="ECO:0000304"/>
    <property type="project" value="MGI"/>
</dbReference>
<dbReference type="CDD" id="cd05236">
    <property type="entry name" value="FAR-N_SDR_e"/>
    <property type="match status" value="1"/>
</dbReference>
<dbReference type="CDD" id="cd09071">
    <property type="entry name" value="FAR_C"/>
    <property type="match status" value="1"/>
</dbReference>
<dbReference type="FunFam" id="3.40.50.720:FF:000278">
    <property type="entry name" value="Fatty acyl-CoA reductase"/>
    <property type="match status" value="1"/>
</dbReference>
<dbReference type="Gene3D" id="3.40.50.720">
    <property type="entry name" value="NAD(P)-binding Rossmann-like Domain"/>
    <property type="match status" value="1"/>
</dbReference>
<dbReference type="InterPro" id="IPR026055">
    <property type="entry name" value="FAR"/>
</dbReference>
<dbReference type="InterPro" id="IPR033640">
    <property type="entry name" value="FAR_C"/>
</dbReference>
<dbReference type="InterPro" id="IPR013120">
    <property type="entry name" value="Far_NAD-bd"/>
</dbReference>
<dbReference type="InterPro" id="IPR036291">
    <property type="entry name" value="NAD(P)-bd_dom_sf"/>
</dbReference>
<dbReference type="PANTHER" id="PTHR11011:SF120">
    <property type="entry name" value="FATTY ACYL-COA REDUCTASE 2"/>
    <property type="match status" value="1"/>
</dbReference>
<dbReference type="PANTHER" id="PTHR11011">
    <property type="entry name" value="MALE STERILITY PROTEIN 2-RELATED"/>
    <property type="match status" value="1"/>
</dbReference>
<dbReference type="Pfam" id="PF07993">
    <property type="entry name" value="NAD_binding_4"/>
    <property type="match status" value="1"/>
</dbReference>
<dbReference type="Pfam" id="PF03015">
    <property type="entry name" value="Sterile"/>
    <property type="match status" value="1"/>
</dbReference>
<dbReference type="SUPFAM" id="SSF51735">
    <property type="entry name" value="NAD(P)-binding Rossmann-fold domains"/>
    <property type="match status" value="1"/>
</dbReference>
<sequence>MSMIAAFYSNKSILITGATGFLGKVLMEKLFRTSPHLKVIYILVRPKSGQTLQERVFQILNSKLFEKVKEVCPNVHEKIRPISADLNQRDFAISKEDVQELLSCTNIIFHCAATVRFDAHLREAVQLNVTATQQLLLMASQMPKLEAFIHISTAFSNCNLSHIDEVIYPCPVEPRKIIDSMEWLDDSIIEEITPKLIGDRPNTYTYTKALGEIVVQQESGNLNVAIVRPSIVGATWQEPFPGWVDNLNGPSGLIIATGKGFLRSIKATPMAVADVIPVDTVVNLTIAVGWYTAVHRPKSTLIYHSTSGNLNPCNWYKMGLQVLATIEKIPFESAFRRPNADFTTSNFTTHYWNTVSHRVPAIIYDFYLRLTGRKPRMLKLMNRLLKTISMLEYFINHSWEWSTNNTEMLLSELSPEDQRVFNFDVRQLNWLEYIENYVLGVKKYLLKEDLAGIPKAKQHLRRLRNIHYLFNTALFLIIWRLLIARSQMARNVWFFIVSFCYKFISYFRASSTLKV</sequence>
<name>FACR2_MOUSE</name>
<reference key="1">
    <citation type="journal article" date="2005" name="Science">
        <title>The transcriptional landscape of the mammalian genome.</title>
        <authorList>
            <person name="Carninci P."/>
            <person name="Kasukawa T."/>
            <person name="Katayama S."/>
            <person name="Gough J."/>
            <person name="Frith M.C."/>
            <person name="Maeda N."/>
            <person name="Oyama R."/>
            <person name="Ravasi T."/>
            <person name="Lenhard B."/>
            <person name="Wells C."/>
            <person name="Kodzius R."/>
            <person name="Shimokawa K."/>
            <person name="Bajic V.B."/>
            <person name="Brenner S.E."/>
            <person name="Batalov S."/>
            <person name="Forrest A.R."/>
            <person name="Zavolan M."/>
            <person name="Davis M.J."/>
            <person name="Wilming L.G."/>
            <person name="Aidinis V."/>
            <person name="Allen J.E."/>
            <person name="Ambesi-Impiombato A."/>
            <person name="Apweiler R."/>
            <person name="Aturaliya R.N."/>
            <person name="Bailey T.L."/>
            <person name="Bansal M."/>
            <person name="Baxter L."/>
            <person name="Beisel K.W."/>
            <person name="Bersano T."/>
            <person name="Bono H."/>
            <person name="Chalk A.M."/>
            <person name="Chiu K.P."/>
            <person name="Choudhary V."/>
            <person name="Christoffels A."/>
            <person name="Clutterbuck D.R."/>
            <person name="Crowe M.L."/>
            <person name="Dalla E."/>
            <person name="Dalrymple B.P."/>
            <person name="de Bono B."/>
            <person name="Della Gatta G."/>
            <person name="di Bernardo D."/>
            <person name="Down T."/>
            <person name="Engstrom P."/>
            <person name="Fagiolini M."/>
            <person name="Faulkner G."/>
            <person name="Fletcher C.F."/>
            <person name="Fukushima T."/>
            <person name="Furuno M."/>
            <person name="Futaki S."/>
            <person name="Gariboldi M."/>
            <person name="Georgii-Hemming P."/>
            <person name="Gingeras T.R."/>
            <person name="Gojobori T."/>
            <person name="Green R.E."/>
            <person name="Gustincich S."/>
            <person name="Harbers M."/>
            <person name="Hayashi Y."/>
            <person name="Hensch T.K."/>
            <person name="Hirokawa N."/>
            <person name="Hill D."/>
            <person name="Huminiecki L."/>
            <person name="Iacono M."/>
            <person name="Ikeo K."/>
            <person name="Iwama A."/>
            <person name="Ishikawa T."/>
            <person name="Jakt M."/>
            <person name="Kanapin A."/>
            <person name="Katoh M."/>
            <person name="Kawasawa Y."/>
            <person name="Kelso J."/>
            <person name="Kitamura H."/>
            <person name="Kitano H."/>
            <person name="Kollias G."/>
            <person name="Krishnan S.P."/>
            <person name="Kruger A."/>
            <person name="Kummerfeld S.K."/>
            <person name="Kurochkin I.V."/>
            <person name="Lareau L.F."/>
            <person name="Lazarevic D."/>
            <person name="Lipovich L."/>
            <person name="Liu J."/>
            <person name="Liuni S."/>
            <person name="McWilliam S."/>
            <person name="Madan Babu M."/>
            <person name="Madera M."/>
            <person name="Marchionni L."/>
            <person name="Matsuda H."/>
            <person name="Matsuzawa S."/>
            <person name="Miki H."/>
            <person name="Mignone F."/>
            <person name="Miyake S."/>
            <person name="Morris K."/>
            <person name="Mottagui-Tabar S."/>
            <person name="Mulder N."/>
            <person name="Nakano N."/>
            <person name="Nakauchi H."/>
            <person name="Ng P."/>
            <person name="Nilsson R."/>
            <person name="Nishiguchi S."/>
            <person name="Nishikawa S."/>
            <person name="Nori F."/>
            <person name="Ohara O."/>
            <person name="Okazaki Y."/>
            <person name="Orlando V."/>
            <person name="Pang K.C."/>
            <person name="Pavan W.J."/>
            <person name="Pavesi G."/>
            <person name="Pesole G."/>
            <person name="Petrovsky N."/>
            <person name="Piazza S."/>
            <person name="Reed J."/>
            <person name="Reid J.F."/>
            <person name="Ring B.Z."/>
            <person name="Ringwald M."/>
            <person name="Rost B."/>
            <person name="Ruan Y."/>
            <person name="Salzberg S.L."/>
            <person name="Sandelin A."/>
            <person name="Schneider C."/>
            <person name="Schoenbach C."/>
            <person name="Sekiguchi K."/>
            <person name="Semple C.A."/>
            <person name="Seno S."/>
            <person name="Sessa L."/>
            <person name="Sheng Y."/>
            <person name="Shibata Y."/>
            <person name="Shimada H."/>
            <person name="Shimada K."/>
            <person name="Silva D."/>
            <person name="Sinclair B."/>
            <person name="Sperling S."/>
            <person name="Stupka E."/>
            <person name="Sugiura K."/>
            <person name="Sultana R."/>
            <person name="Takenaka Y."/>
            <person name="Taki K."/>
            <person name="Tammoja K."/>
            <person name="Tan S.L."/>
            <person name="Tang S."/>
            <person name="Taylor M.S."/>
            <person name="Tegner J."/>
            <person name="Teichmann S.A."/>
            <person name="Ueda H.R."/>
            <person name="van Nimwegen E."/>
            <person name="Verardo R."/>
            <person name="Wei C.L."/>
            <person name="Yagi K."/>
            <person name="Yamanishi H."/>
            <person name="Zabarovsky E."/>
            <person name="Zhu S."/>
            <person name="Zimmer A."/>
            <person name="Hide W."/>
            <person name="Bult C."/>
            <person name="Grimmond S.M."/>
            <person name="Teasdale R.D."/>
            <person name="Liu E.T."/>
            <person name="Brusic V."/>
            <person name="Quackenbush J."/>
            <person name="Wahlestedt C."/>
            <person name="Mattick J.S."/>
            <person name="Hume D.A."/>
            <person name="Kai C."/>
            <person name="Sasaki D."/>
            <person name="Tomaru Y."/>
            <person name="Fukuda S."/>
            <person name="Kanamori-Katayama M."/>
            <person name="Suzuki M."/>
            <person name="Aoki J."/>
            <person name="Arakawa T."/>
            <person name="Iida J."/>
            <person name="Imamura K."/>
            <person name="Itoh M."/>
            <person name="Kato T."/>
            <person name="Kawaji H."/>
            <person name="Kawagashira N."/>
            <person name="Kawashima T."/>
            <person name="Kojima M."/>
            <person name="Kondo S."/>
            <person name="Konno H."/>
            <person name="Nakano K."/>
            <person name="Ninomiya N."/>
            <person name="Nishio T."/>
            <person name="Okada M."/>
            <person name="Plessy C."/>
            <person name="Shibata K."/>
            <person name="Shiraki T."/>
            <person name="Suzuki S."/>
            <person name="Tagami M."/>
            <person name="Waki K."/>
            <person name="Watahiki A."/>
            <person name="Okamura-Oho Y."/>
            <person name="Suzuki H."/>
            <person name="Kawai J."/>
            <person name="Hayashizaki Y."/>
        </authorList>
    </citation>
    <scope>NUCLEOTIDE SEQUENCE [LARGE SCALE MRNA] (ISOFORMS 1 AND 2)</scope>
    <source>
        <strain>C57BL/6J</strain>
        <tissue>Brain cortex</tissue>
        <tissue>Cerebellum</tissue>
        <tissue>Head</tissue>
        <tissue>Hypothalamus</tissue>
    </source>
</reference>
<reference key="2">
    <citation type="journal article" date="2009" name="PLoS Biol.">
        <title>Lineage-specific biology revealed by a finished genome assembly of the mouse.</title>
        <authorList>
            <person name="Church D.M."/>
            <person name="Goodstadt L."/>
            <person name="Hillier L.W."/>
            <person name="Zody M.C."/>
            <person name="Goldstein S."/>
            <person name="She X."/>
            <person name="Bult C.J."/>
            <person name="Agarwala R."/>
            <person name="Cherry J.L."/>
            <person name="DiCuccio M."/>
            <person name="Hlavina W."/>
            <person name="Kapustin Y."/>
            <person name="Meric P."/>
            <person name="Maglott D."/>
            <person name="Birtle Z."/>
            <person name="Marques A.C."/>
            <person name="Graves T."/>
            <person name="Zhou S."/>
            <person name="Teague B."/>
            <person name="Potamousis K."/>
            <person name="Churas C."/>
            <person name="Place M."/>
            <person name="Herschleb J."/>
            <person name="Runnheim R."/>
            <person name="Forrest D."/>
            <person name="Amos-Landgraf J."/>
            <person name="Schwartz D.C."/>
            <person name="Cheng Z."/>
            <person name="Lindblad-Toh K."/>
            <person name="Eichler E.E."/>
            <person name="Ponting C.P."/>
        </authorList>
    </citation>
    <scope>NUCLEOTIDE SEQUENCE [LARGE SCALE GENOMIC DNA]</scope>
    <source>
        <strain>C57BL/6J</strain>
    </source>
</reference>
<reference key="3">
    <citation type="journal article" date="2004" name="Genome Res.">
        <title>The status, quality, and expansion of the NIH full-length cDNA project: the Mammalian Gene Collection (MGC).</title>
        <authorList>
            <consortium name="The MGC Project Team"/>
        </authorList>
    </citation>
    <scope>NUCLEOTIDE SEQUENCE [LARGE SCALE MRNA] (ISOFORM 1)</scope>
    <source>
        <strain>C57BL/6J</strain>
        <tissue>Brain</tissue>
    </source>
</reference>
<reference key="4">
    <citation type="journal article" date="2004" name="J. Biol. Chem.">
        <title>Mammalian wax biosynthesis: I. Identification of two fatty acyl-coenzyme A reductases with different substrate specificities and tissue distributions.</title>
        <authorList>
            <person name="Cheng J.B."/>
            <person name="Russell D.W."/>
        </authorList>
    </citation>
    <scope>FUNCTION</scope>
    <scope>CATALYTIC ACTIVITY</scope>
    <scope>SUBCELLULAR LOCATION</scope>
    <scope>TISSUE SPECIFICITY</scope>
</reference>
<reference key="5">
    <citation type="journal article" date="2022" name="FASEB J.">
        <title>Formation of fatty alcohols-components of meibum lipids-by the fatty acyl-CoA reductase FAR2 is essential for dry eye prevention.</title>
        <authorList>
            <person name="Otsuka K."/>
            <person name="Sawai-Ogawa M."/>
            <person name="Kihara A."/>
        </authorList>
    </citation>
    <scope>FUNCTION</scope>
    <scope>CATALYTIC ACTIVITY</scope>
    <scope>DISRUPTION PHENOTYPE</scope>
</reference>
<protein>
    <recommendedName>
        <fullName evidence="5">Fatty acyl-CoA reductase 2</fullName>
        <shortName evidence="7">Far2</shortName>
        <ecNumber evidence="3">1.2.1.84</ecNumber>
    </recommendedName>
</protein>
<gene>
    <name evidence="11" type="primary">Far2</name>
</gene>
<comment type="function">
    <text evidence="3 4">Catalyzes the reduction of saturated but not unsaturated C16 or C18 fatty acyl-CoA to fatty alcohols (PubMed:15220348). A lower activity can be observed with shorter fatty acyl-CoA substrates (PubMed:15220348). Can produce very long-chain and ultra long-chain FAls, regardless of whether they have a straight or branched chain (PubMed:35238077). It may play a role in the production of ether lipids/plasmalogens and wax monoesters which synthesis requires fatty alcohols as substrates (PubMed:35238077).</text>
</comment>
<comment type="catalytic activity">
    <reaction evidence="3 4">
        <text>a long-chain fatty acyl-CoA + 2 NADPH + 2 H(+) = a long-chain primary fatty alcohol + 2 NADP(+) + CoA</text>
        <dbReference type="Rhea" id="RHEA:52716"/>
        <dbReference type="ChEBI" id="CHEBI:15378"/>
        <dbReference type="ChEBI" id="CHEBI:57287"/>
        <dbReference type="ChEBI" id="CHEBI:57783"/>
        <dbReference type="ChEBI" id="CHEBI:58349"/>
        <dbReference type="ChEBI" id="CHEBI:77396"/>
        <dbReference type="ChEBI" id="CHEBI:83139"/>
        <dbReference type="EC" id="1.2.1.84"/>
    </reaction>
    <physiologicalReaction direction="left-to-right" evidence="9 10">
        <dbReference type="Rhea" id="RHEA:52717"/>
    </physiologicalReaction>
</comment>
<comment type="catalytic activity">
    <reaction evidence="3">
        <text>hexadecanoyl-CoA + 2 NADPH + 2 H(+) = hexadecan-1-ol + 2 NADP(+) + CoA</text>
        <dbReference type="Rhea" id="RHEA:36315"/>
        <dbReference type="ChEBI" id="CHEBI:15378"/>
        <dbReference type="ChEBI" id="CHEBI:16125"/>
        <dbReference type="ChEBI" id="CHEBI:57287"/>
        <dbReference type="ChEBI" id="CHEBI:57379"/>
        <dbReference type="ChEBI" id="CHEBI:57783"/>
        <dbReference type="ChEBI" id="CHEBI:58349"/>
        <dbReference type="EC" id="1.2.1.84"/>
    </reaction>
    <physiologicalReaction direction="left-to-right" evidence="9">
        <dbReference type="Rhea" id="RHEA:36316"/>
    </physiologicalReaction>
</comment>
<comment type="catalytic activity">
    <reaction evidence="3">
        <text>octadecanoyl-CoA + 2 NADPH + 2 H(+) = octadecan-1-ol + 2 NADP(+) + CoA</text>
        <dbReference type="Rhea" id="RHEA:36319"/>
        <dbReference type="ChEBI" id="CHEBI:15378"/>
        <dbReference type="ChEBI" id="CHEBI:32154"/>
        <dbReference type="ChEBI" id="CHEBI:57287"/>
        <dbReference type="ChEBI" id="CHEBI:57394"/>
        <dbReference type="ChEBI" id="CHEBI:57783"/>
        <dbReference type="ChEBI" id="CHEBI:58349"/>
        <dbReference type="EC" id="1.2.1.84"/>
    </reaction>
    <physiologicalReaction direction="left-to-right" evidence="9">
        <dbReference type="Rhea" id="RHEA:36320"/>
    </physiologicalReaction>
</comment>
<comment type="catalytic activity">
    <reaction evidence="10">
        <text>a very long-chain fatty acyl-CoA + 2 NADPH + 2 H(+) = a very long-chain primary fatty alcohol + 2 NADP(+) + CoA</text>
        <dbReference type="Rhea" id="RHEA:81751"/>
        <dbReference type="ChEBI" id="CHEBI:15378"/>
        <dbReference type="ChEBI" id="CHEBI:57287"/>
        <dbReference type="ChEBI" id="CHEBI:57783"/>
        <dbReference type="ChEBI" id="CHEBI:58349"/>
        <dbReference type="ChEBI" id="CHEBI:138261"/>
        <dbReference type="ChEBI" id="CHEBI:138741"/>
    </reaction>
    <physiologicalReaction direction="left-to-right" evidence="10">
        <dbReference type="Rhea" id="RHEA:81752"/>
    </physiologicalReaction>
</comment>
<comment type="catalytic activity">
    <reaction evidence="10">
        <text>an ultra-long-chain fatty acyl-CoA + 2 NADPH + 2 H(+) = an ultra long-chain primary fatty alcohol + 2 NADP(+) + CoA</text>
        <dbReference type="Rhea" id="RHEA:81755"/>
        <dbReference type="ChEBI" id="CHEBI:15378"/>
        <dbReference type="ChEBI" id="CHEBI:57287"/>
        <dbReference type="ChEBI" id="CHEBI:57783"/>
        <dbReference type="ChEBI" id="CHEBI:58349"/>
        <dbReference type="ChEBI" id="CHEBI:143016"/>
        <dbReference type="ChEBI" id="CHEBI:143018"/>
    </reaction>
    <physiologicalReaction direction="left-to-right" evidence="10">
        <dbReference type="Rhea" id="RHEA:81756"/>
    </physiologicalReaction>
</comment>
<comment type="catalytic activity">
    <reaction evidence="1">
        <text>eicosanoyl-CoA + 2 NADPH + 2 H(+) = eicosan-1-ol + 2 NADP(+) + CoA</text>
        <dbReference type="Rhea" id="RHEA:81727"/>
        <dbReference type="ChEBI" id="CHEBI:15378"/>
        <dbReference type="ChEBI" id="CHEBI:57287"/>
        <dbReference type="ChEBI" id="CHEBI:57380"/>
        <dbReference type="ChEBI" id="CHEBI:57783"/>
        <dbReference type="ChEBI" id="CHEBI:58349"/>
        <dbReference type="ChEBI" id="CHEBI:75627"/>
    </reaction>
    <physiologicalReaction direction="left-to-right" evidence="1">
        <dbReference type="Rhea" id="RHEA:81728"/>
    </physiologicalReaction>
</comment>
<comment type="catalytic activity">
    <reaction evidence="10">
        <text>docosanoyl-CoA + 2 NADPH + 2 H(+) = docosan-1-ol + 2 NADP(+) + CoA</text>
        <dbReference type="Rhea" id="RHEA:81731"/>
        <dbReference type="ChEBI" id="CHEBI:15378"/>
        <dbReference type="ChEBI" id="CHEBI:31000"/>
        <dbReference type="ChEBI" id="CHEBI:57287"/>
        <dbReference type="ChEBI" id="CHEBI:57783"/>
        <dbReference type="ChEBI" id="CHEBI:58349"/>
        <dbReference type="ChEBI" id="CHEBI:65059"/>
    </reaction>
    <physiologicalReaction direction="left-to-right" evidence="10">
        <dbReference type="Rhea" id="RHEA:81732"/>
    </physiologicalReaction>
</comment>
<comment type="catalytic activity">
    <reaction evidence="10">
        <text>tetracosanoyl-CoA + 2 NADPH + 2 H(+) = tetracosan-1-ol + 2 NADP(+) + CoA</text>
        <dbReference type="Rhea" id="RHEA:81735"/>
        <dbReference type="ChEBI" id="CHEBI:15378"/>
        <dbReference type="ChEBI" id="CHEBI:57287"/>
        <dbReference type="ChEBI" id="CHEBI:57783"/>
        <dbReference type="ChEBI" id="CHEBI:58349"/>
        <dbReference type="ChEBI" id="CHEBI:65052"/>
        <dbReference type="ChEBI" id="CHEBI:77413"/>
    </reaction>
    <physiologicalReaction direction="left-to-right" evidence="10">
        <dbReference type="Rhea" id="RHEA:81736"/>
    </physiologicalReaction>
</comment>
<comment type="catalytic activity">
    <reaction evidence="10">
        <text>hexacosanoyl-CoA + 2 NADPH + 2 H(+) = hexacosan-1-ol + 2 NADP(+) + CoA</text>
        <dbReference type="Rhea" id="RHEA:81739"/>
        <dbReference type="ChEBI" id="CHEBI:15378"/>
        <dbReference type="ChEBI" id="CHEBI:28415"/>
        <dbReference type="ChEBI" id="CHEBI:57287"/>
        <dbReference type="ChEBI" id="CHEBI:57783"/>
        <dbReference type="ChEBI" id="CHEBI:58349"/>
        <dbReference type="ChEBI" id="CHEBI:64868"/>
    </reaction>
    <physiologicalReaction direction="left-to-right" evidence="10">
        <dbReference type="Rhea" id="RHEA:81740"/>
    </physiologicalReaction>
</comment>
<comment type="catalytic activity">
    <reaction evidence="10">
        <text>octacosanoyl-CoA + 2 NADPH + 2 H(+) = octacosan-1-ol + 2 NADP(+) + CoA</text>
        <dbReference type="Rhea" id="RHEA:81743"/>
        <dbReference type="ChEBI" id="CHEBI:15378"/>
        <dbReference type="ChEBI" id="CHEBI:28243"/>
        <dbReference type="ChEBI" id="CHEBI:57287"/>
        <dbReference type="ChEBI" id="CHEBI:57783"/>
        <dbReference type="ChEBI" id="CHEBI:58349"/>
        <dbReference type="ChEBI" id="CHEBI:74141"/>
    </reaction>
    <physiologicalReaction direction="left-to-right" evidence="10">
        <dbReference type="Rhea" id="RHEA:81744"/>
    </physiologicalReaction>
</comment>
<comment type="catalytic activity">
    <reaction evidence="10">
        <text>triacontanoyl-CoA + 2 NADPH + 2 H(+) = triacontan-1-ol + 2 NADP(+) + CoA</text>
        <dbReference type="Rhea" id="RHEA:81747"/>
        <dbReference type="ChEBI" id="CHEBI:15378"/>
        <dbReference type="ChEBI" id="CHEBI:28409"/>
        <dbReference type="ChEBI" id="CHEBI:57287"/>
        <dbReference type="ChEBI" id="CHEBI:57783"/>
        <dbReference type="ChEBI" id="CHEBI:58349"/>
        <dbReference type="ChEBI" id="CHEBI:76386"/>
    </reaction>
    <physiologicalReaction direction="left-to-right" evidence="10">
        <dbReference type="Rhea" id="RHEA:81748"/>
    </physiologicalReaction>
</comment>
<comment type="catalytic activity">
    <reaction evidence="1">
        <text>18-methylnonadecanoyl-CoA + 2 NADPH + 2 H(+) = 18-methylnonadecan-1-ol + 2 NADP(+) + CoA</text>
        <dbReference type="Rhea" id="RHEA:81767"/>
        <dbReference type="ChEBI" id="CHEBI:15378"/>
        <dbReference type="ChEBI" id="CHEBI:57287"/>
        <dbReference type="ChEBI" id="CHEBI:57783"/>
        <dbReference type="ChEBI" id="CHEBI:58349"/>
        <dbReference type="ChEBI" id="CHEBI:84914"/>
        <dbReference type="ChEBI" id="CHEBI:231999"/>
    </reaction>
    <physiologicalReaction direction="left-to-right" evidence="1">
        <dbReference type="Rhea" id="RHEA:81768"/>
    </physiologicalReaction>
</comment>
<comment type="catalytic activity">
    <reaction evidence="10">
        <text>20-methylheneicosanoyl-CoA + 2 NADPH + 2 H(+) = 20-methylheneicosan-1-ol + 2 NADP(+) + CoA</text>
        <dbReference type="Rhea" id="RHEA:81771"/>
        <dbReference type="ChEBI" id="CHEBI:15378"/>
        <dbReference type="ChEBI" id="CHEBI:57287"/>
        <dbReference type="ChEBI" id="CHEBI:57783"/>
        <dbReference type="ChEBI" id="CHEBI:58349"/>
        <dbReference type="ChEBI" id="CHEBI:84915"/>
        <dbReference type="ChEBI" id="CHEBI:232000"/>
    </reaction>
    <physiologicalReaction direction="left-to-right" evidence="10">
        <dbReference type="Rhea" id="RHEA:81772"/>
    </physiologicalReaction>
</comment>
<comment type="catalytic activity">
    <reaction evidence="10">
        <text>22-methyltricosanoyl-CoA + 2 NADPH + 2 H(+) = 22-methyltricosan-1-ol + 2 NADP(+) + CoA</text>
        <dbReference type="Rhea" id="RHEA:81775"/>
        <dbReference type="ChEBI" id="CHEBI:15378"/>
        <dbReference type="ChEBI" id="CHEBI:57287"/>
        <dbReference type="ChEBI" id="CHEBI:57783"/>
        <dbReference type="ChEBI" id="CHEBI:58349"/>
        <dbReference type="ChEBI" id="CHEBI:84916"/>
        <dbReference type="ChEBI" id="CHEBI:232001"/>
    </reaction>
    <physiologicalReaction direction="left-to-right" evidence="10">
        <dbReference type="Rhea" id="RHEA:81776"/>
    </physiologicalReaction>
</comment>
<comment type="catalytic activity">
    <reaction evidence="10">
        <text>24-methylpentacosanoyl-CoA + 2 NADPH + 2 H(+) = 24-methylpentacosan-1-ol + 2 NADP(+) + CoA</text>
        <dbReference type="Rhea" id="RHEA:81779"/>
        <dbReference type="ChEBI" id="CHEBI:15378"/>
        <dbReference type="ChEBI" id="CHEBI:57287"/>
        <dbReference type="ChEBI" id="CHEBI:57783"/>
        <dbReference type="ChEBI" id="CHEBI:58349"/>
        <dbReference type="ChEBI" id="CHEBI:84917"/>
        <dbReference type="ChEBI" id="CHEBI:232002"/>
    </reaction>
    <physiologicalReaction direction="left-to-right" evidence="10">
        <dbReference type="Rhea" id="RHEA:81780"/>
    </physiologicalReaction>
</comment>
<comment type="subcellular location">
    <subcellularLocation>
        <location evidence="3">Peroxisome membrane</location>
        <topology evidence="1">Single-pass membrane protein</topology>
    </subcellularLocation>
</comment>
<comment type="alternative products">
    <event type="alternative splicing"/>
    <isoform>
        <id>Q7TNT2-1</id>
        <name>1</name>
        <sequence type="displayed"/>
    </isoform>
    <isoform>
        <id>Q7TNT2-2</id>
        <name>2</name>
        <sequence type="described" ref="VSP_021682"/>
    </isoform>
</comment>
<comment type="tissue specificity">
    <text evidence="3">Specifically expressed in the meibomian glands of the eyelid and the sebaceous glands of the skin. Also expressed in the brain where large quantities of ether lipids are synthesized.</text>
</comment>
<comment type="disruption phenotype">
    <text evidence="4">In the knockout, the meibum lipids do not melt at body temperature, resulting in plugging of the meibomian gland orifices and the typical evaporative dry eye phenotype.</text>
</comment>
<comment type="similarity">
    <text evidence="8">Belongs to the fatty acyl-CoA reductase family.</text>
</comment>
<organism>
    <name type="scientific">Mus musculus</name>
    <name type="common">Mouse</name>
    <dbReference type="NCBI Taxonomy" id="10090"/>
    <lineage>
        <taxon>Eukaryota</taxon>
        <taxon>Metazoa</taxon>
        <taxon>Chordata</taxon>
        <taxon>Craniata</taxon>
        <taxon>Vertebrata</taxon>
        <taxon>Euteleostomi</taxon>
        <taxon>Mammalia</taxon>
        <taxon>Eutheria</taxon>
        <taxon>Euarchontoglires</taxon>
        <taxon>Glires</taxon>
        <taxon>Rodentia</taxon>
        <taxon>Myomorpha</taxon>
        <taxon>Muroidea</taxon>
        <taxon>Muridae</taxon>
        <taxon>Murinae</taxon>
        <taxon>Mus</taxon>
        <taxon>Mus</taxon>
    </lineage>
</organism>
<feature type="chain" id="PRO_0000261402" description="Fatty acyl-CoA reductase 2">
    <location>
        <begin position="1"/>
        <end position="515"/>
    </location>
</feature>
<feature type="topological domain" description="Cytoplasmic" evidence="1">
    <location>
        <begin position="1"/>
        <end position="464"/>
    </location>
</feature>
<feature type="transmembrane region" description="Helical" evidence="2">
    <location>
        <begin position="465"/>
        <end position="484"/>
    </location>
</feature>
<feature type="topological domain" description="Peroxisomal" evidence="1">
    <location>
        <begin position="485"/>
        <end position="515"/>
    </location>
</feature>
<feature type="splice variant" id="VSP_021682" description="In isoform 2." evidence="6">
    <original>VSFCYKFISYFRASSTLKV</original>
    <variation>CPLFKL</variation>
    <location>
        <begin position="497"/>
        <end position="515"/>
    </location>
</feature>
<feature type="sequence conflict" description="In Ref. 1; BAC30056." evidence="8" ref="1">
    <original>A</original>
    <variation>T</variation>
    <location>
        <position position="84"/>
    </location>
</feature>
<feature type="sequence conflict" description="In Ref. 1; BAE36237." evidence="8" ref="1">
    <original>P</original>
    <variation>H</variation>
    <location>
        <position position="194"/>
    </location>
</feature>
<feature type="sequence conflict" description="In Ref. 1; BAE36237." evidence="8" ref="1">
    <original>Q</original>
    <variation>E</variation>
    <location>
        <position position="321"/>
    </location>
</feature>
<evidence type="ECO:0000250" key="1">
    <source>
        <dbReference type="UniProtKB" id="Q96K12"/>
    </source>
</evidence>
<evidence type="ECO:0000255" key="2"/>
<evidence type="ECO:0000269" key="3">
    <source>
    </source>
</evidence>
<evidence type="ECO:0000269" key="4">
    <source>
    </source>
</evidence>
<evidence type="ECO:0000303" key="5">
    <source>
    </source>
</evidence>
<evidence type="ECO:0000303" key="6">
    <source>
    </source>
</evidence>
<evidence type="ECO:0000303" key="7">
    <source>
    </source>
</evidence>
<evidence type="ECO:0000305" key="8"/>
<evidence type="ECO:0000305" key="9">
    <source>
    </source>
</evidence>
<evidence type="ECO:0000305" key="10">
    <source>
    </source>
</evidence>
<evidence type="ECO:0000312" key="11">
    <source>
        <dbReference type="MGI" id="MGI:2687035"/>
    </source>
</evidence>